<keyword id="KW-0012">Acyltransferase</keyword>
<keyword id="KW-0997">Cell inner membrane</keyword>
<keyword id="KW-1003">Cell membrane</keyword>
<keyword id="KW-0444">Lipid biosynthesis</keyword>
<keyword id="KW-0443">Lipid metabolism</keyword>
<keyword id="KW-0472">Membrane</keyword>
<keyword id="KW-0594">Phospholipid biosynthesis</keyword>
<keyword id="KW-1208">Phospholipid metabolism</keyword>
<keyword id="KW-1185">Reference proteome</keyword>
<keyword id="KW-0808">Transferase</keyword>
<comment type="catalytic activity">
    <reaction evidence="1">
        <text>sn-glycerol 3-phosphate + an acyl-CoA = a 1-acyl-sn-glycero-3-phosphate + CoA</text>
        <dbReference type="Rhea" id="RHEA:15325"/>
        <dbReference type="ChEBI" id="CHEBI:57287"/>
        <dbReference type="ChEBI" id="CHEBI:57597"/>
        <dbReference type="ChEBI" id="CHEBI:57970"/>
        <dbReference type="ChEBI" id="CHEBI:58342"/>
        <dbReference type="EC" id="2.3.1.15"/>
    </reaction>
</comment>
<comment type="pathway">
    <text evidence="1">Phospholipid metabolism; CDP-diacylglycerol biosynthesis; CDP-diacylglycerol from sn-glycerol 3-phosphate: step 1/3.</text>
</comment>
<comment type="subcellular location">
    <subcellularLocation>
        <location evidence="1">Cell inner membrane</location>
        <topology evidence="1">Peripheral membrane protein</topology>
        <orientation evidence="1">Cytoplasmic side</orientation>
    </subcellularLocation>
</comment>
<comment type="domain">
    <text evidence="1">The HXXXXD motif is essential for acyltransferase activity and may constitute the binding site for the phosphate moiety of the glycerol-3-phosphate.</text>
</comment>
<comment type="similarity">
    <text evidence="1">Belongs to the GPAT/DAPAT family.</text>
</comment>
<dbReference type="EC" id="2.3.1.15" evidence="1"/>
<dbReference type="EMBL" id="AE009442">
    <property type="protein sequence ID" value="AAO28200.1"/>
    <property type="molecule type" value="Genomic_DNA"/>
</dbReference>
<dbReference type="SMR" id="Q87EJ1"/>
<dbReference type="KEGG" id="xft:PD_0316"/>
<dbReference type="HOGENOM" id="CLU_015407_0_0_6"/>
<dbReference type="UniPathway" id="UPA00557">
    <property type="reaction ID" value="UER00612"/>
</dbReference>
<dbReference type="Proteomes" id="UP000002516">
    <property type="component" value="Chromosome"/>
</dbReference>
<dbReference type="GO" id="GO:0005886">
    <property type="term" value="C:plasma membrane"/>
    <property type="evidence" value="ECO:0007669"/>
    <property type="project" value="UniProtKB-SubCell"/>
</dbReference>
<dbReference type="GO" id="GO:0004366">
    <property type="term" value="F:glycerol-3-phosphate O-acyltransferase activity"/>
    <property type="evidence" value="ECO:0007669"/>
    <property type="project" value="UniProtKB-UniRule"/>
</dbReference>
<dbReference type="GO" id="GO:0016024">
    <property type="term" value="P:CDP-diacylglycerol biosynthetic process"/>
    <property type="evidence" value="ECO:0007669"/>
    <property type="project" value="UniProtKB-UniRule"/>
</dbReference>
<dbReference type="GO" id="GO:0006631">
    <property type="term" value="P:fatty acid metabolic process"/>
    <property type="evidence" value="ECO:0007669"/>
    <property type="project" value="TreeGrafter"/>
</dbReference>
<dbReference type="CDD" id="cd07993">
    <property type="entry name" value="LPLAT_DHAPAT-like"/>
    <property type="match status" value="1"/>
</dbReference>
<dbReference type="HAMAP" id="MF_00393">
    <property type="entry name" value="Glyc3P_acyltrans"/>
    <property type="match status" value="1"/>
</dbReference>
<dbReference type="InterPro" id="IPR022284">
    <property type="entry name" value="GPAT/DHAPAT"/>
</dbReference>
<dbReference type="InterPro" id="IPR045520">
    <property type="entry name" value="GPAT/DHAPAT_C"/>
</dbReference>
<dbReference type="InterPro" id="IPR041728">
    <property type="entry name" value="GPAT/DHAPAT_LPLAT"/>
</dbReference>
<dbReference type="InterPro" id="IPR028354">
    <property type="entry name" value="GPAT_PlsB"/>
</dbReference>
<dbReference type="InterPro" id="IPR002123">
    <property type="entry name" value="Plipid/glycerol_acylTrfase"/>
</dbReference>
<dbReference type="NCBIfam" id="TIGR03703">
    <property type="entry name" value="plsB"/>
    <property type="match status" value="1"/>
</dbReference>
<dbReference type="NCBIfam" id="NF003441">
    <property type="entry name" value="PRK04974.1"/>
    <property type="match status" value="1"/>
</dbReference>
<dbReference type="PANTHER" id="PTHR12563:SF17">
    <property type="entry name" value="DIHYDROXYACETONE PHOSPHATE ACYLTRANSFERASE"/>
    <property type="match status" value="1"/>
</dbReference>
<dbReference type="PANTHER" id="PTHR12563">
    <property type="entry name" value="GLYCEROL-3-PHOSPHATE ACYLTRANSFERASE"/>
    <property type="match status" value="1"/>
</dbReference>
<dbReference type="Pfam" id="PF01553">
    <property type="entry name" value="Acyltransferase"/>
    <property type="match status" value="1"/>
</dbReference>
<dbReference type="Pfam" id="PF19277">
    <property type="entry name" value="GPAT_C"/>
    <property type="match status" value="1"/>
</dbReference>
<dbReference type="PIRSF" id="PIRSF500064">
    <property type="entry name" value="GPAT"/>
    <property type="match status" value="1"/>
</dbReference>
<dbReference type="PIRSF" id="PIRSF000437">
    <property type="entry name" value="GPAT_DHAPAT"/>
    <property type="match status" value="1"/>
</dbReference>
<dbReference type="SMART" id="SM00563">
    <property type="entry name" value="PlsC"/>
    <property type="match status" value="1"/>
</dbReference>
<dbReference type="SUPFAM" id="SSF69593">
    <property type="entry name" value="Glycerol-3-phosphate (1)-acyltransferase"/>
    <property type="match status" value="1"/>
</dbReference>
<sequence>MPKKNSPLLPKETTTTQSSVDTSGSSNLTWPVSEHTIRRPLWARLLGQILDPWLDLSIEPEHSVQYNDGRPIIYVLEDYGLCNTLILDKACRKTKLPSPLIPLSGNPLQRKRAYLALSRRSSSNSLIPNQRGGKTHSDSLANLLQAHRIRDTLDVHLVPVSIFIGRTPDRQSGWFAVLFSENWALVGRFRRILAILLNGRNTIVCFAPPISVRQTLNEGLPPERTLRKLQRVLRTHFRRIRETVIGPDLSTRRLLVDNVLATEAVREAIGAQAKRDGTDLSETWRKAQAYAWEIAADYSSPVIRSADFLFSHVWNRIYAGVLVHHVDSFKEISPGHEIVYVPSHRSHMDYLLLSYCLYKCSIGLPHIVAGINLNLPVVGTLLRKCGAFFIRRSIKGNMLYSVVLSEYVAQLVAGGYSLEYFIEGGRSRTGRLLQPKGGMIMMTVQAFLRQPRRPVLFQPIYIGYEKLMEGTSYLDELSGEPKKKESIWRVFWNIPKVLKQKYGQVVVNFGEPIALNDVLAELAPEWEGQALNENEKPAWLSSTVNHLARQIQTRINSAADVNPINLLALALLSTPKHAMGEADLIAQITLCKKILLELPYSNRVTITPHTPERIIAHAEQINILTRVHHPLGDVLRVDGDNAVLLSYFRNNVLHLFTASAWVACCFKNNRRMSRIALIRLGVGMYPFLQAELFLPWTEDQFAQHIQQVIELFVREGLLLSAGNEEEDPLTRNTSQTDEVFRLRAISHSLQQAFERYYITISILVKNGPGTLSASELESLCQLAAQRLSLLYASTAPEFFDKGLFRGFIQKLRELNLVWPDTYSKLLFDERLDTSAKDAQVILGRELRHTIERISPEATKPAPK</sequence>
<gene>
    <name evidence="1" type="primary">plsB</name>
    <name type="ordered locus">PD_0316</name>
</gene>
<reference key="1">
    <citation type="journal article" date="2003" name="J. Bacteriol.">
        <title>Comparative analyses of the complete genome sequences of Pierce's disease and citrus variegated chlorosis strains of Xylella fastidiosa.</title>
        <authorList>
            <person name="Van Sluys M.A."/>
            <person name="de Oliveira M.C."/>
            <person name="Monteiro-Vitorello C.B."/>
            <person name="Miyaki C.Y."/>
            <person name="Furlan L.R."/>
            <person name="Camargo L.E.A."/>
            <person name="da Silva A.C.R."/>
            <person name="Moon D.H."/>
            <person name="Takita M.A."/>
            <person name="Lemos E.G.M."/>
            <person name="Machado M.A."/>
            <person name="Ferro M.I.T."/>
            <person name="da Silva F.R."/>
            <person name="Goldman M.H.S."/>
            <person name="Goldman G.H."/>
            <person name="Lemos M.V.F."/>
            <person name="El-Dorry H."/>
            <person name="Tsai S.M."/>
            <person name="Carrer H."/>
            <person name="Carraro D.M."/>
            <person name="de Oliveira R.C."/>
            <person name="Nunes L.R."/>
            <person name="Siqueira W.J."/>
            <person name="Coutinho L.L."/>
            <person name="Kimura E.T."/>
            <person name="Ferro E.S."/>
            <person name="Harakava R."/>
            <person name="Kuramae E.E."/>
            <person name="Marino C.L."/>
            <person name="Giglioti E."/>
            <person name="Abreu I.L."/>
            <person name="Alves L.M.C."/>
            <person name="do Amaral A.M."/>
            <person name="Baia G.S."/>
            <person name="Blanco S.R."/>
            <person name="Brito M.S."/>
            <person name="Cannavan F.S."/>
            <person name="Celestino A.V."/>
            <person name="da Cunha A.F."/>
            <person name="Fenille R.C."/>
            <person name="Ferro J.A."/>
            <person name="Formighieri E.F."/>
            <person name="Kishi L.T."/>
            <person name="Leoni S.G."/>
            <person name="Oliveira A.R."/>
            <person name="Rosa V.E. Jr."/>
            <person name="Sassaki F.T."/>
            <person name="Sena J.A.D."/>
            <person name="de Souza A.A."/>
            <person name="Truffi D."/>
            <person name="Tsukumo F."/>
            <person name="Yanai G.M."/>
            <person name="Zaros L.G."/>
            <person name="Civerolo E.L."/>
            <person name="Simpson A.J.G."/>
            <person name="Almeida N.F. Jr."/>
            <person name="Setubal J.C."/>
            <person name="Kitajima J.P."/>
        </authorList>
    </citation>
    <scope>NUCLEOTIDE SEQUENCE [LARGE SCALE GENOMIC DNA]</scope>
    <source>
        <strain>Temecula1 / ATCC 700964</strain>
    </source>
</reference>
<evidence type="ECO:0000255" key="1">
    <source>
        <dbReference type="HAMAP-Rule" id="MF_00393"/>
    </source>
</evidence>
<evidence type="ECO:0000256" key="2">
    <source>
        <dbReference type="SAM" id="MobiDB-lite"/>
    </source>
</evidence>
<proteinExistence type="inferred from homology"/>
<name>PLSB_XYLFT</name>
<protein>
    <recommendedName>
        <fullName evidence="1">Glycerol-3-phosphate acyltransferase</fullName>
        <shortName evidence="1">GPAT</shortName>
        <ecNumber evidence="1">2.3.1.15</ecNumber>
    </recommendedName>
</protein>
<accession>Q87EJ1</accession>
<organism>
    <name type="scientific">Xylella fastidiosa (strain Temecula1 / ATCC 700964)</name>
    <dbReference type="NCBI Taxonomy" id="183190"/>
    <lineage>
        <taxon>Bacteria</taxon>
        <taxon>Pseudomonadati</taxon>
        <taxon>Pseudomonadota</taxon>
        <taxon>Gammaproteobacteria</taxon>
        <taxon>Lysobacterales</taxon>
        <taxon>Lysobacteraceae</taxon>
        <taxon>Xylella</taxon>
    </lineage>
</organism>
<feature type="chain" id="PRO_0000195242" description="Glycerol-3-phosphate acyltransferase">
    <location>
        <begin position="1"/>
        <end position="863"/>
    </location>
</feature>
<feature type="region of interest" description="Disordered" evidence="2">
    <location>
        <begin position="1"/>
        <end position="29"/>
    </location>
</feature>
<feature type="short sequence motif" description="HXXXXD motif">
    <location>
        <begin position="344"/>
        <end position="349"/>
    </location>
</feature>
<feature type="compositionally biased region" description="Polar residues" evidence="2">
    <location>
        <begin position="12"/>
        <end position="29"/>
    </location>
</feature>